<dbReference type="EC" id="3.2.2.9" evidence="1 5 6 8"/>
<dbReference type="EMBL" id="M31772">
    <property type="protein sequence ID" value="AAA23678.1"/>
    <property type="status" value="ALT_INIT"/>
    <property type="molecule type" value="Genomic_DNA"/>
</dbReference>
<dbReference type="EMBL" id="U24438">
    <property type="protein sequence ID" value="AAC38291.1"/>
    <property type="molecule type" value="Genomic_DNA"/>
</dbReference>
<dbReference type="EMBL" id="M83735">
    <property type="protein sequence ID" value="AAA24322.1"/>
    <property type="molecule type" value="Genomic_DNA"/>
</dbReference>
<dbReference type="EMBL" id="U70214">
    <property type="protein sequence ID" value="AAB08589.1"/>
    <property type="molecule type" value="Genomic_DNA"/>
</dbReference>
<dbReference type="EMBL" id="U00096">
    <property type="protein sequence ID" value="AAC73270.1"/>
    <property type="molecule type" value="Genomic_DNA"/>
</dbReference>
<dbReference type="EMBL" id="AP009048">
    <property type="protein sequence ID" value="BAB96736.1"/>
    <property type="molecule type" value="Genomic_DNA"/>
</dbReference>
<dbReference type="PIR" id="S45227">
    <property type="entry name" value="S45227"/>
</dbReference>
<dbReference type="RefSeq" id="NP_414701.1">
    <property type="nucleotide sequence ID" value="NC_000913.3"/>
</dbReference>
<dbReference type="RefSeq" id="WP_000689844.1">
    <property type="nucleotide sequence ID" value="NZ_SSZK01000004.1"/>
</dbReference>
<dbReference type="PDB" id="1JYS">
    <property type="method" value="X-ray"/>
    <property type="resolution" value="1.90 A"/>
    <property type="chains" value="A/B=1-232"/>
</dbReference>
<dbReference type="PDB" id="1NC1">
    <property type="method" value="X-ray"/>
    <property type="resolution" value="2.00 A"/>
    <property type="chains" value="A/B=1-232"/>
</dbReference>
<dbReference type="PDB" id="1NC3">
    <property type="method" value="X-ray"/>
    <property type="resolution" value="2.20 A"/>
    <property type="chains" value="A/B=1-232"/>
</dbReference>
<dbReference type="PDB" id="1Y6Q">
    <property type="method" value="X-ray"/>
    <property type="resolution" value="2.20 A"/>
    <property type="chains" value="A/B=1-232"/>
</dbReference>
<dbReference type="PDB" id="1Y6R">
    <property type="method" value="X-ray"/>
    <property type="resolution" value="2.20 A"/>
    <property type="chains" value="A/B=1-232"/>
</dbReference>
<dbReference type="PDB" id="1Z5N">
    <property type="method" value="X-ray"/>
    <property type="resolution" value="2.10 A"/>
    <property type="chains" value="A/B=1-232"/>
</dbReference>
<dbReference type="PDB" id="1Z5O">
    <property type="method" value="X-ray"/>
    <property type="resolution" value="2.00 A"/>
    <property type="chains" value="A/B=1-232"/>
</dbReference>
<dbReference type="PDB" id="1Z5P">
    <property type="method" value="X-ray"/>
    <property type="resolution" value="2.00 A"/>
    <property type="chains" value="A=1-232"/>
</dbReference>
<dbReference type="PDB" id="3O4V">
    <property type="method" value="X-ray"/>
    <property type="resolution" value="1.75 A"/>
    <property type="chains" value="A/B=1-232"/>
</dbReference>
<dbReference type="PDB" id="4WKC">
    <property type="method" value="X-ray"/>
    <property type="resolution" value="1.64 A"/>
    <property type="chains" value="A=1-232"/>
</dbReference>
<dbReference type="PDB" id="4YML">
    <property type="method" value="X-ray"/>
    <property type="resolution" value="1.75 A"/>
    <property type="chains" value="A=1-232"/>
</dbReference>
<dbReference type="PDBsum" id="1JYS"/>
<dbReference type="PDBsum" id="1NC1"/>
<dbReference type="PDBsum" id="1NC3"/>
<dbReference type="PDBsum" id="1Y6Q"/>
<dbReference type="PDBsum" id="1Y6R"/>
<dbReference type="PDBsum" id="1Z5N"/>
<dbReference type="PDBsum" id="1Z5O"/>
<dbReference type="PDBsum" id="1Z5P"/>
<dbReference type="PDBsum" id="3O4V"/>
<dbReference type="PDBsum" id="4WKC"/>
<dbReference type="PDBsum" id="4YML"/>
<dbReference type="SMR" id="P0AF12"/>
<dbReference type="BioGRID" id="4260991">
    <property type="interactions" value="46"/>
</dbReference>
<dbReference type="BioGRID" id="852836">
    <property type="interactions" value="1"/>
</dbReference>
<dbReference type="DIP" id="DIP-10270N"/>
<dbReference type="FunCoup" id="P0AF12">
    <property type="interactions" value="323"/>
</dbReference>
<dbReference type="IntAct" id="P0AF12">
    <property type="interactions" value="7"/>
</dbReference>
<dbReference type="STRING" id="511145.b0159"/>
<dbReference type="BindingDB" id="P0AF12"/>
<dbReference type="DrugBank" id="DB02158">
    <property type="generic name" value="(2S,3S,4R,5S)-2-(4-Amino-4,5-dihydro-1H-pyrrolo[3,2-d]pyrimidin-7-yl)-5-[(methylsulfanyl)methyl]-3,4-pyrrolidinediol"/>
</dbReference>
<dbReference type="DrugBank" id="DB08606">
    <property type="generic name" value="(3R,4S)-1-[(4-AMINO-5H-PYRROLO[3,2-D]PYRIMIDIN-7-YL)METHYL]-4-[(METHYLSULFANYL)METHYL]PYRROLIDIN-3-OL"/>
</dbReference>
<dbReference type="DrugBank" id="DB02933">
    <property type="generic name" value="5'-Deoxy-5'-(Methylthio)-Tubercidin"/>
</dbReference>
<dbReference type="DrugBank" id="DB00173">
    <property type="generic name" value="Adenine"/>
</dbReference>
<dbReference type="DrugBank" id="DB02281">
    <property type="generic name" value="Formycin"/>
</dbReference>
<dbReference type="jPOST" id="P0AF12"/>
<dbReference type="PaxDb" id="511145-b0159"/>
<dbReference type="EnsemblBacteria" id="AAC73270">
    <property type="protein sequence ID" value="AAC73270"/>
    <property type="gene ID" value="b0159"/>
</dbReference>
<dbReference type="GeneID" id="93777267"/>
<dbReference type="GeneID" id="948542"/>
<dbReference type="KEGG" id="ecj:JW0155"/>
<dbReference type="KEGG" id="eco:b0159"/>
<dbReference type="KEGG" id="ecoc:C3026_00725"/>
<dbReference type="PATRIC" id="fig|1411691.4.peg.2121"/>
<dbReference type="EchoBASE" id="EB1082"/>
<dbReference type="eggNOG" id="COG0775">
    <property type="taxonomic scope" value="Bacteria"/>
</dbReference>
<dbReference type="HOGENOM" id="CLU_031248_2_2_6"/>
<dbReference type="InParanoid" id="P0AF12"/>
<dbReference type="OMA" id="DQFVHSK"/>
<dbReference type="OrthoDB" id="9792278at2"/>
<dbReference type="PhylomeDB" id="P0AF12"/>
<dbReference type="BioCyc" id="EcoCyc:EG11090-MONOMER"/>
<dbReference type="BioCyc" id="MetaCyc:EG11090-MONOMER"/>
<dbReference type="BRENDA" id="3.2.2.16">
    <property type="organism ID" value="2026"/>
</dbReference>
<dbReference type="BRENDA" id="3.2.2.30">
    <property type="organism ID" value="2026"/>
</dbReference>
<dbReference type="BRENDA" id="3.2.2.9">
    <property type="organism ID" value="2026"/>
</dbReference>
<dbReference type="SABIO-RK" id="P0AF12"/>
<dbReference type="UniPathway" id="UPA00904">
    <property type="reaction ID" value="UER00871"/>
</dbReference>
<dbReference type="EvolutionaryTrace" id="P0AF12"/>
<dbReference type="PRO" id="PR:P0AF12"/>
<dbReference type="Proteomes" id="UP000000625">
    <property type="component" value="Chromosome"/>
</dbReference>
<dbReference type="GO" id="GO:0005829">
    <property type="term" value="C:cytosol"/>
    <property type="evidence" value="ECO:0000314"/>
    <property type="project" value="EcoCyc"/>
</dbReference>
<dbReference type="GO" id="GO:0008782">
    <property type="term" value="F:adenosylhomocysteine nucleosidase activity"/>
    <property type="evidence" value="ECO:0000314"/>
    <property type="project" value="EcoCyc"/>
</dbReference>
<dbReference type="GO" id="GO:0042802">
    <property type="term" value="F:identical protein binding"/>
    <property type="evidence" value="ECO:0000353"/>
    <property type="project" value="IntAct"/>
</dbReference>
<dbReference type="GO" id="GO:0008930">
    <property type="term" value="F:methylthioadenosine nucleosidase activity"/>
    <property type="evidence" value="ECO:0000314"/>
    <property type="project" value="EcoCyc"/>
</dbReference>
<dbReference type="GO" id="GO:0042803">
    <property type="term" value="F:protein homodimerization activity"/>
    <property type="evidence" value="ECO:0000314"/>
    <property type="project" value="EcoCyc"/>
</dbReference>
<dbReference type="GO" id="GO:0019509">
    <property type="term" value="P:L-methionine salvage from methylthioadenosine"/>
    <property type="evidence" value="ECO:0007669"/>
    <property type="project" value="UniProtKB-UniRule"/>
</dbReference>
<dbReference type="GO" id="GO:0019284">
    <property type="term" value="P:L-methionine salvage from S-adenosylmethionine"/>
    <property type="evidence" value="ECO:0000314"/>
    <property type="project" value="EcoCyc"/>
</dbReference>
<dbReference type="GO" id="GO:0046124">
    <property type="term" value="P:purine deoxyribonucleoside catabolic process"/>
    <property type="evidence" value="ECO:0007669"/>
    <property type="project" value="UniProtKB-UniRule"/>
</dbReference>
<dbReference type="GO" id="GO:0110052">
    <property type="term" value="P:toxic metabolite repair"/>
    <property type="evidence" value="ECO:0000315"/>
    <property type="project" value="UniProtKB"/>
</dbReference>
<dbReference type="CDD" id="cd09008">
    <property type="entry name" value="MTAN"/>
    <property type="match status" value="1"/>
</dbReference>
<dbReference type="FunFam" id="3.40.50.1580:FF:000001">
    <property type="entry name" value="MTA/SAH nucleosidase family protein"/>
    <property type="match status" value="1"/>
</dbReference>
<dbReference type="Gene3D" id="3.40.50.1580">
    <property type="entry name" value="Nucleoside phosphorylase domain"/>
    <property type="match status" value="1"/>
</dbReference>
<dbReference type="HAMAP" id="MF_01684">
    <property type="entry name" value="Salvage_MtnN"/>
    <property type="match status" value="1"/>
</dbReference>
<dbReference type="InterPro" id="IPR010049">
    <property type="entry name" value="MTA_SAH_Nsdase"/>
</dbReference>
<dbReference type="InterPro" id="IPR000845">
    <property type="entry name" value="Nucleoside_phosphorylase_d"/>
</dbReference>
<dbReference type="InterPro" id="IPR035994">
    <property type="entry name" value="Nucleoside_phosphorylase_sf"/>
</dbReference>
<dbReference type="NCBIfam" id="TIGR01704">
    <property type="entry name" value="MTA_SAH-Nsdase"/>
    <property type="match status" value="1"/>
</dbReference>
<dbReference type="NCBIfam" id="NF004079">
    <property type="entry name" value="PRK05584.1"/>
    <property type="match status" value="1"/>
</dbReference>
<dbReference type="PANTHER" id="PTHR46832">
    <property type="entry name" value="5'-METHYLTHIOADENOSINE/S-ADENOSYLHOMOCYSTEINE NUCLEOSIDASE"/>
    <property type="match status" value="1"/>
</dbReference>
<dbReference type="PANTHER" id="PTHR46832:SF1">
    <property type="entry name" value="5'-METHYLTHIOADENOSINE_S-ADENOSYLHOMOCYSTEINE NUCLEOSIDASE"/>
    <property type="match status" value="1"/>
</dbReference>
<dbReference type="Pfam" id="PF01048">
    <property type="entry name" value="PNP_UDP_1"/>
    <property type="match status" value="1"/>
</dbReference>
<dbReference type="SUPFAM" id="SSF53167">
    <property type="entry name" value="Purine and uridine phosphorylases"/>
    <property type="match status" value="1"/>
</dbReference>
<sequence>MKIGIIGAMEEEVTLLRDKIENRQTISLGGCEIYTGQLNGTEVALLKSGIGKVAAALGATLLLEHCKPDVIINTGSAGGLAPTLKVGDIVVSDEARYHDADVTAFGYEYGQLPGCPAGFKADDKLIAAAEACIAELNLNAVRGLIVSGDAFINGSVGLAKIRHNFPQAIAVEMEATAIAHVCHNFNVPFVVVRAISDVADQQSHLSFDEFLAVAAKQSSLMVESLVQKLAHG</sequence>
<proteinExistence type="evidence at protein level"/>
<name>MTNN_ECOLI</name>
<gene>
    <name evidence="1" type="primary">mtnN</name>
    <name type="synonym">mtn</name>
    <name type="synonym">pfs</name>
    <name type="synonym">yadA</name>
    <name type="ordered locus">b0159</name>
    <name type="ordered locus">JW0155</name>
</gene>
<feature type="chain" id="PRO_0000164439" description="5'-methylthioadenosine/S-adenosylhomocysteine nucleosidase">
    <location>
        <begin position="1"/>
        <end position="232"/>
    </location>
</feature>
<feature type="active site" description="Proton acceptor" evidence="1 13">
    <location>
        <position position="12"/>
    </location>
</feature>
<feature type="active site" description="Proton donor" evidence="1 13">
    <location>
        <position position="197"/>
    </location>
</feature>
<feature type="binding site" evidence="1 2">
    <location>
        <position position="78"/>
    </location>
    <ligand>
        <name>substrate</name>
    </ligand>
</feature>
<feature type="binding site" evidence="1 2">
    <location>
        <position position="152"/>
    </location>
    <ligand>
        <name>substrate</name>
    </ligand>
</feature>
<feature type="binding site" evidence="1">
    <location>
        <begin position="173"/>
        <end position="174"/>
    </location>
    <ligand>
        <name>substrate</name>
    </ligand>
</feature>
<feature type="mutagenesis site" description="13-19% of wild-type catalytic efficiency." evidence="6">
    <original>M</original>
    <variation>A</variation>
    <location>
        <position position="9"/>
    </location>
</feature>
<feature type="mutagenesis site" description="Loss of catalytic activity." evidence="6">
    <original>E</original>
    <variation>A</variation>
    <variation>Q</variation>
    <location>
        <position position="12"/>
    </location>
</feature>
<feature type="mutagenesis site" description="12-23% of wild-type catalytic efficiency." evidence="6">
    <original>I</original>
    <variation>A</variation>
    <location>
        <position position="50"/>
    </location>
</feature>
<feature type="mutagenesis site" description="13-23% of wild-type catalytic efficiency." evidence="6">
    <original>S</original>
    <variation>A</variation>
    <location>
        <position position="76"/>
    </location>
</feature>
<feature type="mutagenesis site" description="0.5% of wild-type catalytic efficiency." evidence="6">
    <original>F</original>
    <variation>A</variation>
    <location>
        <position position="151"/>
    </location>
</feature>
<feature type="mutagenesis site" description="0.5% of wild-type catalytic efficiency." evidence="6">
    <original>M</original>
    <variation>A</variation>
    <location>
        <position position="173"/>
    </location>
</feature>
<feature type="mutagenesis site" description="Loss of catalytic activity." evidence="6">
    <original>E</original>
    <variation>A</variation>
    <variation>Q</variation>
    <location>
        <position position="174"/>
    </location>
</feature>
<feature type="mutagenesis site" description="13-28% of wild-type catalytic efficiency." evidence="6">
    <original>R</original>
    <variation>A</variation>
    <location>
        <position position="193"/>
    </location>
</feature>
<feature type="mutagenesis site" description="2-4% of wild-type catalytic efficiency." evidence="6">
    <original>S</original>
    <variation>A</variation>
    <location>
        <position position="196"/>
    </location>
</feature>
<feature type="mutagenesis site" description="Loss of catalytic activity." evidence="6">
    <original>D</original>
    <variation>A</variation>
    <variation>N</variation>
    <location>
        <position position="197"/>
    </location>
</feature>
<feature type="mutagenesis site" description="2% of wild-type catalytic efficiency." evidence="6">
    <original>F</original>
    <variation>A</variation>
    <location>
        <position position="207"/>
    </location>
</feature>
<feature type="sequence conflict" description="In Ref. 1; AAA23678/AAA24322." evidence="11" ref="1">
    <original>AVAAKQSSLMVESLVQKLAHG</original>
    <variation>LLPLNSPA</variation>
    <location>
        <begin position="212"/>
        <end position="232"/>
    </location>
</feature>
<feature type="strand" evidence="14">
    <location>
        <begin position="2"/>
        <end position="9"/>
    </location>
</feature>
<feature type="helix" evidence="14">
    <location>
        <begin position="10"/>
        <end position="17"/>
    </location>
</feature>
<feature type="strand" evidence="14">
    <location>
        <begin position="21"/>
        <end position="28"/>
    </location>
</feature>
<feature type="strand" evidence="14">
    <location>
        <begin position="31"/>
        <end position="38"/>
    </location>
</feature>
<feature type="strand" evidence="14">
    <location>
        <begin position="41"/>
        <end position="47"/>
    </location>
</feature>
<feature type="helix" evidence="14">
    <location>
        <begin position="52"/>
        <end position="66"/>
    </location>
</feature>
<feature type="strand" evidence="14">
    <location>
        <begin position="69"/>
        <end position="79"/>
    </location>
</feature>
<feature type="strand" evidence="14">
    <location>
        <begin position="89"/>
        <end position="99"/>
    </location>
</feature>
<feature type="helix" evidence="14">
    <location>
        <begin position="103"/>
        <end position="105"/>
    </location>
</feature>
<feature type="strand" evidence="14">
    <location>
        <begin position="117"/>
        <end position="120"/>
    </location>
</feature>
<feature type="helix" evidence="14">
    <location>
        <begin position="123"/>
        <end position="135"/>
    </location>
</feature>
<feature type="strand" evidence="14">
    <location>
        <begin position="140"/>
        <end position="147"/>
    </location>
</feature>
<feature type="helix" evidence="14">
    <location>
        <begin position="155"/>
        <end position="164"/>
    </location>
</feature>
<feature type="strand" evidence="14">
    <location>
        <begin position="168"/>
        <end position="174"/>
    </location>
</feature>
<feature type="helix" evidence="14">
    <location>
        <begin position="175"/>
        <end position="185"/>
    </location>
</feature>
<feature type="strand" evidence="14">
    <location>
        <begin position="189"/>
        <end position="197"/>
    </location>
</feature>
<feature type="helix" evidence="14">
    <location>
        <begin position="203"/>
        <end position="231"/>
    </location>
</feature>
<reference key="1">
    <citation type="journal article" date="1990" name="Proc. Natl. Acad. Sci. U.S.A.">
        <title>Structure and regulation of the gene for dGTP triphosphohydrolase from Escherichia coli.</title>
        <authorList>
            <person name="Wurgler S.M."/>
            <person name="Richardson C.C."/>
        </authorList>
    </citation>
    <scope>NUCLEOTIDE SEQUENCE [GENOMIC DNA]</scope>
    <source>
        <strain>K12</strain>
    </source>
</reference>
<reference key="2">
    <citation type="journal article" date="1998" name="Biochim. Biophys. Acta">
        <title>Cloning and expression of Escherichia coli 5'-methylthioadenosine/S-adenosylhomocysteine nucleosidase: identification of the pfs gene product.</title>
        <authorList>
            <person name="Cornell K.A."/>
            <person name="Riscoe M.K."/>
        </authorList>
    </citation>
    <scope>NUCLEOTIDE SEQUENCE [GENOMIC DNA]</scope>
    <scope>CHARACTERIZATION</scope>
</reference>
<reference key="3">
    <citation type="journal article" date="1994" name="Nucleic Acids Res.">
        <title>Systematic sequencing of the Escherichia coli genome: analysis of the 2.4-4.1 min (110,917-193,643 bp) region.</title>
        <authorList>
            <person name="Fujita N."/>
            <person name="Mori H."/>
            <person name="Yura T."/>
            <person name="Ishihama A."/>
        </authorList>
    </citation>
    <scope>NUCLEOTIDE SEQUENCE [LARGE SCALE GENOMIC DNA]</scope>
    <source>
        <strain>K12 / W3110 / ATCC 27325 / DSM 5911</strain>
    </source>
</reference>
<reference key="4">
    <citation type="submission" date="1997-01" db="EMBL/GenBank/DDBJ databases">
        <title>Sequence of minutes 4-25 of Escherichia coli.</title>
        <authorList>
            <person name="Chung E."/>
            <person name="Allen E."/>
            <person name="Araujo R."/>
            <person name="Aparicio A.M."/>
            <person name="Davis K."/>
            <person name="Duncan M."/>
            <person name="Federspiel N."/>
            <person name="Hyman R."/>
            <person name="Kalman S."/>
            <person name="Komp C."/>
            <person name="Kurdi O."/>
            <person name="Lew H."/>
            <person name="Lin D."/>
            <person name="Namath A."/>
            <person name="Oefner P."/>
            <person name="Roberts D."/>
            <person name="Schramm S."/>
            <person name="Davis R.W."/>
        </authorList>
    </citation>
    <scope>NUCLEOTIDE SEQUENCE [LARGE SCALE GENOMIC DNA]</scope>
    <source>
        <strain>K12 / MG1655 / ATCC 47076</strain>
    </source>
</reference>
<reference key="5">
    <citation type="journal article" date="1997" name="Science">
        <title>The complete genome sequence of Escherichia coli K-12.</title>
        <authorList>
            <person name="Blattner F.R."/>
            <person name="Plunkett G. III"/>
            <person name="Bloch C.A."/>
            <person name="Perna N.T."/>
            <person name="Burland V."/>
            <person name="Riley M."/>
            <person name="Collado-Vides J."/>
            <person name="Glasner J.D."/>
            <person name="Rode C.K."/>
            <person name="Mayhew G.F."/>
            <person name="Gregor J."/>
            <person name="Davis N.W."/>
            <person name="Kirkpatrick H.A."/>
            <person name="Goeden M.A."/>
            <person name="Rose D.J."/>
            <person name="Mau B."/>
            <person name="Shao Y."/>
        </authorList>
    </citation>
    <scope>NUCLEOTIDE SEQUENCE [LARGE SCALE GENOMIC DNA]</scope>
    <source>
        <strain>K12 / MG1655 / ATCC 47076</strain>
    </source>
</reference>
<reference key="6">
    <citation type="journal article" date="2006" name="Mol. Syst. Biol.">
        <title>Highly accurate genome sequences of Escherichia coli K-12 strains MG1655 and W3110.</title>
        <authorList>
            <person name="Hayashi K."/>
            <person name="Morooka N."/>
            <person name="Yamamoto Y."/>
            <person name="Fujita K."/>
            <person name="Isono K."/>
            <person name="Choi S."/>
            <person name="Ohtsubo E."/>
            <person name="Baba T."/>
            <person name="Wanner B.L."/>
            <person name="Mori H."/>
            <person name="Horiuchi T."/>
        </authorList>
    </citation>
    <scope>NUCLEOTIDE SEQUENCE [LARGE SCALE GENOMIC DNA]</scope>
    <source>
        <strain>K12 / W3110 / ATCC 27325 / DSM 5911</strain>
    </source>
</reference>
<reference key="7">
    <citation type="journal article" date="1985" name="Biochem. J.">
        <title>Escherichia coli S-adenosylhomocysteine/5'-methylthioadenosine nucleosidase. Purification, substrate specificity and mechanism of action.</title>
        <authorList>
            <person name="Della Ragione F."/>
            <person name="Porcelli M."/>
            <person name="Carteni-Farina M."/>
            <person name="Zappia V."/>
            <person name="Pegg A.E."/>
        </authorList>
    </citation>
    <scope>FUNCTION</scope>
    <scope>CATALYTIC ACTIVITY</scope>
    <scope>SUBSTRATE SPECIFICITY</scope>
    <scope>BIOPHYSICOCHEMICAL PROPERTIES</scope>
    <scope>ACTIVITY REGULATION</scope>
</reference>
<reference key="8">
    <citation type="journal article" date="1996" name="Biochem. Biophys. Res. Commun.">
        <title>Characterization of recombinant Eschericha coli 5'-methylthioadenosine/S-adenosylhomocysteine nucleosidase: analysis of enzymatic activity and substrate specificity.</title>
        <authorList>
            <person name="Cornell K.A."/>
            <person name="Swarts W.E."/>
            <person name="Barry R.D."/>
            <person name="Riscoe M.K."/>
        </authorList>
    </citation>
    <scope>BIOPHYSICOCHEMICAL PROPERTIES</scope>
    <scope>ACTIVITY REGULATION</scope>
</reference>
<reference key="9">
    <citation type="journal article" date="1997" name="Electrophoresis">
        <title>Escherichia coli proteome analysis using the gene-protein database.</title>
        <authorList>
            <person name="VanBogelen R.A."/>
            <person name="Abshire K.Z."/>
            <person name="Moldover B."/>
            <person name="Olson E.R."/>
            <person name="Neidhardt F.C."/>
        </authorList>
    </citation>
    <scope>IDENTIFICATION BY 2D-GEL</scope>
</reference>
<reference key="10">
    <citation type="journal article" date="2005" name="Biochemistry">
        <title>Mutational analysis of a nucleosidase involved in quorum-sensing autoinducer-2 biosynthesis.</title>
        <authorList>
            <person name="Lee J.E."/>
            <person name="Luong W."/>
            <person name="Huang D.J."/>
            <person name="Cornell K.A."/>
            <person name="Riscoe M.K."/>
            <person name="Howell P.L."/>
        </authorList>
    </citation>
    <scope>FUNCTION</scope>
    <scope>CATALYTIC ACTIVITY</scope>
    <scope>KINETIC PARAMETERS</scope>
    <scope>MUTAGENESIS OF MET-9; GLU-12; ILE-50; SER-76; PHE-151; MET-173; GLU-174; ARG-193; SER-196; ASP-197 AND PHE-207</scope>
</reference>
<reference key="11">
    <citation type="journal article" date="2005" name="Chem. Biol.">
        <title>A nucleosidase required for in vivo function of the S-adenosyl-L-methionine radical enzyme, biotin synthase.</title>
        <authorList>
            <person name="Choi-Rhee E."/>
            <person name="Cronan J.E."/>
        </authorList>
    </citation>
    <scope>FUNCTION</scope>
    <scope>CATALYTIC ACTIVITY</scope>
    <scope>DISRUPTION PHENOTYPE</scope>
</reference>
<reference key="12">
    <citation type="journal article" date="2001" name="Structure">
        <title>Structure of E. coli 5'-methylthioadenosine/S-adenosylhomocysteine nucleosidase reveals similarity to the purine nucleoside phosphorylases.</title>
        <authorList>
            <person name="Lee J.E."/>
            <person name="Cornell K.A."/>
            <person name="Riscoe M.K."/>
            <person name="Howell P.L."/>
        </authorList>
    </citation>
    <scope>X-RAY CRYSTALLOGRAPHY (1.9 ANGSTROMS) IN COMPLEX WITH SUBSTRATE</scope>
    <scope>SUBUNIT</scope>
</reference>
<reference key="13">
    <citation type="journal article" date="2003" name="J. Biol. Chem.">
        <title>Structure of Escherichia coli 5'-methylthioadenosine/ S-adenosylhomocysteine nucleosidase inhibitor complexes provide insight into the conformational changes required for substrate binding and catalysis.</title>
        <authorList>
            <person name="Lee J.E."/>
            <person name="Cornell K.A."/>
            <person name="Riscoe M.K."/>
            <person name="Howell P.L."/>
        </authorList>
    </citation>
    <scope>X-RAY CRYSTALLOGRAPHY (2.0 ANGSTROMS) IN COMPLEX WITH SUBSTRATE ANALOGS</scope>
    <scope>ACTIVITY REGULATION</scope>
</reference>
<reference key="14">
    <citation type="journal article" date="2005" name="J. Biol. Chem.">
        <title>Femtomolar transition state analogue inhibitors of 5'-methylthioadenosine/S-adenosylhomocysteine nucleosidase from Escherichia coli.</title>
        <authorList>
            <person name="Singh V."/>
            <person name="Evans G.B."/>
            <person name="Lenz D.H."/>
            <person name="Mason J.M."/>
            <person name="Clinch K."/>
            <person name="Mee S."/>
            <person name="Painter G.F."/>
            <person name="Tyler P.C."/>
            <person name="Furneaux R.H."/>
            <person name="Lee J.E."/>
            <person name="Howell P.L."/>
            <person name="Schramm V.L."/>
        </authorList>
    </citation>
    <scope>X-RAY CRYSTALLOGRAPHY (2.2 ANGSTROMS) IN COMPLEX WITH SUBSTRATE ANALOGS</scope>
    <scope>ACTIVITY REGULATION</scope>
</reference>
<reference key="15">
    <citation type="journal article" date="2005" name="J. Mol. Biol.">
        <title>Structural snapshots of MTA/AdoHcy nucleosidase along the reaction coordinate provide insights into enzyme and nucleoside flexibility during catalysis.</title>
        <authorList>
            <person name="Lee J.E."/>
            <person name="Smith G.D."/>
            <person name="Horvatin C."/>
            <person name="Huang D.J."/>
            <person name="Cornell K.A."/>
            <person name="Riscoe M.K."/>
            <person name="Howell P.L."/>
        </authorList>
    </citation>
    <scope>X-RAY CRYSTALLOGRAPHY (2.1 ANGSTROMS) OF WILD-TYPE AND MUTANTS ASN-197 AND GLN-12 IN COMPLEX WITH MTA SUBSTRATE OR PRODUCTS</scope>
    <scope>REACTION MECHANISM</scope>
    <scope>ACTIVE SITES</scope>
</reference>
<evidence type="ECO:0000255" key="1">
    <source>
        <dbReference type="HAMAP-Rule" id="MF_01684"/>
    </source>
</evidence>
<evidence type="ECO:0000269" key="2">
    <source>
    </source>
</evidence>
<evidence type="ECO:0000269" key="3">
    <source>
    </source>
</evidence>
<evidence type="ECO:0000269" key="4">
    <source>
    </source>
</evidence>
<evidence type="ECO:0000269" key="5">
    <source>
    </source>
</evidence>
<evidence type="ECO:0000269" key="6">
    <source>
    </source>
</evidence>
<evidence type="ECO:0000269" key="7">
    <source>
    </source>
</evidence>
<evidence type="ECO:0000269" key="8">
    <source>
    </source>
</evidence>
<evidence type="ECO:0000269" key="9">
    <source>
    </source>
</evidence>
<evidence type="ECO:0000303" key="10">
    <source>
    </source>
</evidence>
<evidence type="ECO:0000305" key="11"/>
<evidence type="ECO:0000305" key="12">
    <source>
    </source>
</evidence>
<evidence type="ECO:0000305" key="13">
    <source>
    </source>
</evidence>
<evidence type="ECO:0007829" key="14">
    <source>
        <dbReference type="PDB" id="3O4V"/>
    </source>
</evidence>
<organism>
    <name type="scientific">Escherichia coli (strain K12)</name>
    <dbReference type="NCBI Taxonomy" id="83333"/>
    <lineage>
        <taxon>Bacteria</taxon>
        <taxon>Pseudomonadati</taxon>
        <taxon>Pseudomonadota</taxon>
        <taxon>Gammaproteobacteria</taxon>
        <taxon>Enterobacterales</taxon>
        <taxon>Enterobacteriaceae</taxon>
        <taxon>Escherichia</taxon>
    </lineage>
</organism>
<accession>P0AF12</accession>
<accession>P24247</accession>
<protein>
    <recommendedName>
        <fullName evidence="1 10">5'-methylthioadenosine/S-adenosylhomocysteine nucleosidase</fullName>
        <shortName evidence="1">MTA/SAH nucleosidase</shortName>
        <shortName evidence="1 10">MTAN</shortName>
        <ecNumber evidence="1 5 6 8">3.2.2.9</ecNumber>
    </recommendedName>
    <alternativeName>
        <fullName evidence="1 12">5'-deoxyadenosine nucleosidase</fullName>
        <shortName evidence="1 12">DOA nucleosidase</shortName>
        <shortName evidence="1 12">dAdo nucleosidase</shortName>
    </alternativeName>
    <alternativeName>
        <fullName evidence="1">5'-methylthioadenosine nucleosidase</fullName>
        <shortName evidence="1">MTA nucleosidase</shortName>
    </alternativeName>
    <alternativeName>
        <fullName evidence="1">S-adenosylhomocysteine nucleosidase</fullName>
        <shortName evidence="1">AdoHcy nucleosidase</shortName>
        <shortName evidence="1">SAH nucleosidase</shortName>
        <shortName evidence="1">SRH nucleosidase</shortName>
    </alternativeName>
</protein>
<comment type="function">
    <text evidence="5 6 8">Catalyzes the irreversible cleavage of the glycosidic bond in both 5'-methylthioadenosine (MTA) and S-adenosylhomocysteine (SAH/AdoHcy) to adenine and the corresponding thioribose, 5'-methylthioribose and S-ribosylhomocysteine, respectively (PubMed:16101288, PubMed:3911944). Also cleaves 5'-deoxyadenosine, a toxic by-product of radical S-adenosylmethionine (SAM) enzymes, into 5-deoxyribose and adenine. Thus, is required for in vivo function of the radical SAM enzymes biotin synthase and lipoic acid synthase, that are inhibited by 5'-deoxyadenosine accumulation (PubMed:15911379). Can also use 5'-isobutylthioadenosine, 5'-n-butylthioadenosine, S-adenosyl-D-homocysteine, decarboxylated adenosylhomocysteine, deaminated adenosylhomocysteine and S-2-aza-adenosylhomocysteine as substrates in vitro (PubMed:3911944).</text>
</comment>
<comment type="catalytic activity">
    <reaction evidence="1 6 8">
        <text>S-adenosyl-L-homocysteine + H2O = S-(5-deoxy-D-ribos-5-yl)-L-homocysteine + adenine</text>
        <dbReference type="Rhea" id="RHEA:17805"/>
        <dbReference type="ChEBI" id="CHEBI:15377"/>
        <dbReference type="ChEBI" id="CHEBI:16708"/>
        <dbReference type="ChEBI" id="CHEBI:57856"/>
        <dbReference type="ChEBI" id="CHEBI:58195"/>
        <dbReference type="EC" id="3.2.2.9"/>
    </reaction>
</comment>
<comment type="catalytic activity">
    <reaction evidence="1 6 8">
        <text>S-methyl-5'-thioadenosine + H2O = 5-(methylsulfanyl)-D-ribose + adenine</text>
        <dbReference type="Rhea" id="RHEA:13617"/>
        <dbReference type="ChEBI" id="CHEBI:15377"/>
        <dbReference type="ChEBI" id="CHEBI:16708"/>
        <dbReference type="ChEBI" id="CHEBI:17509"/>
        <dbReference type="ChEBI" id="CHEBI:78440"/>
        <dbReference type="EC" id="3.2.2.9"/>
    </reaction>
</comment>
<comment type="catalytic activity">
    <reaction evidence="1 5">
        <text>5'-deoxyadenosine + H2O = 5-deoxy-D-ribose + adenine</text>
        <dbReference type="Rhea" id="RHEA:29859"/>
        <dbReference type="ChEBI" id="CHEBI:15377"/>
        <dbReference type="ChEBI" id="CHEBI:16708"/>
        <dbReference type="ChEBI" id="CHEBI:17319"/>
        <dbReference type="ChEBI" id="CHEBI:149540"/>
        <dbReference type="EC" id="3.2.2.9"/>
    </reaction>
    <physiologicalReaction direction="left-to-right" evidence="1 5">
        <dbReference type="Rhea" id="RHEA:29860"/>
    </physiologicalReaction>
</comment>
<comment type="activity regulation">
    <text evidence="3 4 8 9">Strongly inhibited by aryl-substituted MTA analogs, alkyl-substituted MTA analogs, 5'-methylthioformycin, 5'-chloroformycin, S-formycinylhomocysteine, 5'-methylthiotubercidin, S-tubercidinylhomocysteine and S-8-aza-adenosylhomocysteine. Poorly inhibited by 5'-isobutylthioinosine, 5'-n-butylthioinosine, 5'-methylthio-3-deaza-adenosine, 5'-isobutylthio-3-deaza-adenosine, S-n-6-methyl-3-deaza-adenosylhomocysteine, S-adenosylhomocysteine sulphoxide and Sinefungin.</text>
</comment>
<comment type="biophysicochemical properties">
    <kinetics>
        <KM evidence="8">0.4 uM for 5'-methylthioadenosine (at pH 7 and 37 degrees Celsius)</KM>
        <KM evidence="6">0.8 uM for 5'-methylthioadenosine (at pH 7 and 22 degrees Celsius)</KM>
        <KM evidence="8">4.3 uM for S-adenosylhomocysteine (at pH 7 and 37 degrees Celsius)</KM>
        <KM evidence="6">1.3 uM for S-adenosylhomocysteine (at pH 7 and 22 degrees Celsius)</KM>
        <text evidence="6">kcat is 3.0 sec(-1) and 2.6 sec(-1) with 5'-methylthioadenosine and S-adenosylhomocysteine as substrate, respectively.</text>
    </kinetics>
    <phDependence>
        <text evidence="9">Exhibits activity across a broad pH range. Enzyme activity is moderately improved under acidic conditions.</text>
    </phDependence>
    <temperatureDependence>
        <text evidence="9">Optimum temperature is 37-45 degrees Celsius. Rapidly inactivated after exposure for 10 minutes at 55 degrees Celsius.</text>
    </temperatureDependence>
</comment>
<comment type="pathway">
    <text evidence="1">Amino-acid biosynthesis; L-methionine biosynthesis via salvage pathway; S-methyl-5-thio-alpha-D-ribose 1-phosphate from S-methyl-5'-thioadenosine (hydrolase route): step 1/2.</text>
</comment>
<comment type="subunit">
    <text evidence="1 2 3 4 7">Homodimer.</text>
</comment>
<comment type="interaction">
    <interactant intactId="EBI-1114261">
        <id>P0AF12</id>
    </interactant>
    <interactant intactId="EBI-1114261">
        <id>P0AF12</id>
        <label>mtnN</label>
    </interactant>
    <organismsDiffer>false</organismsDiffer>
    <experiments>2</experiments>
</comment>
<comment type="disruption phenotype">
    <text evidence="5">Cells lacking this gene are deficient in biotin synthase (BioB) activity in vivo due to accumulation of 5'-deoxyadenosine.</text>
</comment>
<comment type="similarity">
    <text evidence="1 11">Belongs to the PNP/UDP phosphorylase family. MtnN subfamily.</text>
</comment>
<comment type="sequence caution" evidence="11">
    <conflict type="erroneous initiation">
        <sequence resource="EMBL-CDS" id="AAA23678"/>
    </conflict>
</comment>
<keyword id="KW-0002">3D-structure</keyword>
<keyword id="KW-0028">Amino-acid biosynthesis</keyword>
<keyword id="KW-0378">Hydrolase</keyword>
<keyword id="KW-0486">Methionine biosynthesis</keyword>
<keyword id="KW-1185">Reference proteome</keyword>